<keyword id="KW-0131">Cell cycle</keyword>
<keyword id="KW-0132">Cell division</keyword>
<keyword id="KW-0175">Coiled coil</keyword>
<keyword id="KW-0963">Cytoplasm</keyword>
<keyword id="KW-0206">Cytoskeleton</keyword>
<keyword id="KW-0493">Microtubule</keyword>
<keyword id="KW-0498">Mitosis</keyword>
<keyword id="KW-1185">Reference proteome</keyword>
<keyword id="KW-0677">Repeat</keyword>
<keyword id="KW-0813">Transport</keyword>
<keyword id="KW-0853">WD repeat</keyword>
<sequence>MARLLTNRQADELHKSIIAYLSANDLPNTAAALRAELNLTEEDFDATAVKKYETLLEKKWTSIVRLQKKIMDLEARNAALQSELDNLTPASLLKPRRDPTSWLPTHPPRYSLESHRDTINCIAFHPKFSSLASGSDDFTIKIWDWELGELEMTLKGHTRAVLDVDYGSPQGITMLASCSSDLSVKLWDPAEGYKNVRTLLGHDHSVSAVRFIPCRNLLASASRDKDVRIWDVTTGYCVRSIQGHTGWVRDVCPSFDGNFLFSSGDDMTARLWDISAIPNPENKVTMAGHEHFIECCALAPPTSYQYLAPVAGLKGPSYPKSAAEFMATGSRDKTIKVWDVRGTCLMTLIGHDNWVRGIVFHPAGKYLLSVSDDRTLRCWDLSQEGKCVKTIKDAHDRFVTCLSWAPGVAKDVPAIPSNTAKGESSEIKETLKSPDVQIRCVIATGSVDRKLQIFAA</sequence>
<proteinExistence type="inferred from homology"/>
<protein>
    <recommendedName>
        <fullName evidence="1">Nuclear distribution protein PAC1</fullName>
    </recommendedName>
    <alternativeName>
        <fullName evidence="1">Lissencephaly-1 homolog</fullName>
        <shortName evidence="1">LIS-1</shortName>
    </alternativeName>
    <alternativeName>
        <fullName evidence="1">nudF homolog</fullName>
    </alternativeName>
</protein>
<feature type="chain" id="PRO_0000405061" description="Nuclear distribution protein PAC1">
    <location>
        <begin position="1"/>
        <end position="456"/>
    </location>
</feature>
<feature type="domain" description="LisH" evidence="1">
    <location>
        <begin position="9"/>
        <end position="41"/>
    </location>
</feature>
<feature type="repeat" description="WD 1">
    <location>
        <begin position="114"/>
        <end position="153"/>
    </location>
</feature>
<feature type="repeat" description="WD 2">
    <location>
        <begin position="156"/>
        <end position="197"/>
    </location>
</feature>
<feature type="repeat" description="WD 3">
    <location>
        <begin position="201"/>
        <end position="240"/>
    </location>
</feature>
<feature type="repeat" description="WD 4">
    <location>
        <begin position="243"/>
        <end position="282"/>
    </location>
</feature>
<feature type="repeat" description="WD 5">
    <location>
        <begin position="288"/>
        <end position="348"/>
    </location>
</feature>
<feature type="repeat" description="WD 6">
    <location>
        <begin position="350"/>
        <end position="389"/>
    </location>
</feature>
<feature type="repeat" description="WD 7">
    <location>
        <begin position="394"/>
        <end position="437"/>
    </location>
</feature>
<feature type="repeat" description="WD 8">
    <location>
        <begin position="439"/>
        <end position="456"/>
    </location>
</feature>
<feature type="coiled-coil region" evidence="1">
    <location>
        <begin position="61"/>
        <end position="88"/>
    </location>
</feature>
<comment type="function">
    <text evidence="1">Positively regulates the activity of the minus-end directed microtubule motor protein dynein. May enhance dynein-mediated microtubule sliding by targeting dynein to the microtubule plus end. Required for nuclear migration during vegetative growth as well as development. Required for retrograde early endosome (EE) transport from the hyphal tip. Required for localization of dynein to the mitotic spindle poles. Recruits additional proteins to the dynein complex at SPBs.</text>
</comment>
<comment type="subunit">
    <text evidence="1">Self-associates. Interacts with NDL1 and dynein.</text>
</comment>
<comment type="subcellular location">
    <subcellularLocation>
        <location evidence="1">Cytoplasm</location>
        <location evidence="1">Cytoskeleton</location>
    </subcellularLocation>
    <subcellularLocation>
        <location evidence="1">Cytoplasm</location>
        <location evidence="1">Cytoskeleton</location>
        <location evidence="1">Spindle pole</location>
    </subcellularLocation>
    <text evidence="1">Localizes to the plus ends of microtubules at the hyphal tip and the mitotic spindle poles.</text>
</comment>
<comment type="domain">
    <text evidence="1">Dimerization mediated by the LisH domain may be required to activate dynein.</text>
</comment>
<comment type="similarity">
    <text evidence="1">Belongs to the WD repeat LIS1/nudF family.</text>
</comment>
<gene>
    <name evidence="1" type="primary">PAC1</name>
    <name evidence="1" type="synonym">LIS1</name>
    <name type="ORF">HCDG_09479</name>
</gene>
<accession>C6HTE8</accession>
<dbReference type="EMBL" id="GG692441">
    <property type="protein sequence ID" value="EER36426.1"/>
    <property type="molecule type" value="Genomic_DNA"/>
</dbReference>
<dbReference type="SMR" id="C6HTE8"/>
<dbReference type="STRING" id="544712.C6HTE8"/>
<dbReference type="VEuPathDB" id="FungiDB:HCDG_09479"/>
<dbReference type="eggNOG" id="KOG0295">
    <property type="taxonomic scope" value="Eukaryota"/>
</dbReference>
<dbReference type="HOGENOM" id="CLU_000288_57_15_1"/>
<dbReference type="OMA" id="RGTCLMT"/>
<dbReference type="OrthoDB" id="5352at299071"/>
<dbReference type="Proteomes" id="UP000002624">
    <property type="component" value="Unassembled WGS sequence"/>
</dbReference>
<dbReference type="GO" id="GO:0005737">
    <property type="term" value="C:cytoplasm"/>
    <property type="evidence" value="ECO:0007669"/>
    <property type="project" value="UniProtKB-UniRule"/>
</dbReference>
<dbReference type="GO" id="GO:0005874">
    <property type="term" value="C:microtubule"/>
    <property type="evidence" value="ECO:0007669"/>
    <property type="project" value="UniProtKB-KW"/>
</dbReference>
<dbReference type="GO" id="GO:0005875">
    <property type="term" value="C:microtubule associated complex"/>
    <property type="evidence" value="ECO:0007669"/>
    <property type="project" value="UniProtKB-UniRule"/>
</dbReference>
<dbReference type="GO" id="GO:0000922">
    <property type="term" value="C:spindle pole"/>
    <property type="evidence" value="ECO:0007669"/>
    <property type="project" value="UniProtKB-SubCell"/>
</dbReference>
<dbReference type="GO" id="GO:1990234">
    <property type="term" value="C:transferase complex"/>
    <property type="evidence" value="ECO:0007669"/>
    <property type="project" value="UniProtKB-ARBA"/>
</dbReference>
<dbReference type="GO" id="GO:0070840">
    <property type="term" value="F:dynein complex binding"/>
    <property type="evidence" value="ECO:0007669"/>
    <property type="project" value="UniProtKB-UniRule"/>
</dbReference>
<dbReference type="GO" id="GO:0051301">
    <property type="term" value="P:cell division"/>
    <property type="evidence" value="ECO:0007669"/>
    <property type="project" value="UniProtKB-KW"/>
</dbReference>
<dbReference type="GO" id="GO:0000132">
    <property type="term" value="P:establishment of mitotic spindle orientation"/>
    <property type="evidence" value="ECO:0007669"/>
    <property type="project" value="UniProtKB-UniRule"/>
</dbReference>
<dbReference type="GO" id="GO:0051012">
    <property type="term" value="P:microtubule sliding"/>
    <property type="evidence" value="ECO:0007669"/>
    <property type="project" value="UniProtKB-UniRule"/>
</dbReference>
<dbReference type="CDD" id="cd00200">
    <property type="entry name" value="WD40"/>
    <property type="match status" value="1"/>
</dbReference>
<dbReference type="FunFam" id="2.130.10.10:FF:000342">
    <property type="entry name" value="Nuclear distribution protein PAC1"/>
    <property type="match status" value="1"/>
</dbReference>
<dbReference type="FunFam" id="1.20.960.30:FF:000002">
    <property type="entry name" value="Platelet-activating factor acetylhydrolase ib"/>
    <property type="match status" value="1"/>
</dbReference>
<dbReference type="Gene3D" id="1.20.960.30">
    <property type="match status" value="1"/>
</dbReference>
<dbReference type="Gene3D" id="2.130.10.10">
    <property type="entry name" value="YVTN repeat-like/Quinoprotein amine dehydrogenase"/>
    <property type="match status" value="1"/>
</dbReference>
<dbReference type="HAMAP" id="MF_03141">
    <property type="entry name" value="lis1"/>
    <property type="match status" value="1"/>
</dbReference>
<dbReference type="InterPro" id="IPR017252">
    <property type="entry name" value="Dynein_regulator_LIS1"/>
</dbReference>
<dbReference type="InterPro" id="IPR020472">
    <property type="entry name" value="G-protein_beta_WD-40_rep"/>
</dbReference>
<dbReference type="InterPro" id="IPR037190">
    <property type="entry name" value="LIS1_N"/>
</dbReference>
<dbReference type="InterPro" id="IPR006594">
    <property type="entry name" value="LisH"/>
</dbReference>
<dbReference type="InterPro" id="IPR056795">
    <property type="entry name" value="PAC1-like_LisH-like_dom"/>
</dbReference>
<dbReference type="InterPro" id="IPR015943">
    <property type="entry name" value="WD40/YVTN_repeat-like_dom_sf"/>
</dbReference>
<dbReference type="InterPro" id="IPR019775">
    <property type="entry name" value="WD40_repeat_CS"/>
</dbReference>
<dbReference type="InterPro" id="IPR036322">
    <property type="entry name" value="WD40_repeat_dom_sf"/>
</dbReference>
<dbReference type="InterPro" id="IPR001680">
    <property type="entry name" value="WD40_rpt"/>
</dbReference>
<dbReference type="PANTHER" id="PTHR22847:SF637">
    <property type="entry name" value="WD REPEAT DOMAIN 5B"/>
    <property type="match status" value="1"/>
</dbReference>
<dbReference type="PANTHER" id="PTHR22847">
    <property type="entry name" value="WD40 REPEAT PROTEIN"/>
    <property type="match status" value="1"/>
</dbReference>
<dbReference type="Pfam" id="PF24951">
    <property type="entry name" value="LisH_PAC1"/>
    <property type="match status" value="1"/>
</dbReference>
<dbReference type="Pfam" id="PF00400">
    <property type="entry name" value="WD40"/>
    <property type="match status" value="6"/>
</dbReference>
<dbReference type="PIRSF" id="PIRSF037647">
    <property type="entry name" value="Dynein_regulator_Lis1"/>
    <property type="match status" value="1"/>
</dbReference>
<dbReference type="PRINTS" id="PR00320">
    <property type="entry name" value="GPROTEINBRPT"/>
</dbReference>
<dbReference type="SMART" id="SM00320">
    <property type="entry name" value="WD40"/>
    <property type="match status" value="7"/>
</dbReference>
<dbReference type="SUPFAM" id="SSF109925">
    <property type="entry name" value="Lissencephaly-1 protein (Lis-1, PAF-AH alpha) N-terminal domain"/>
    <property type="match status" value="1"/>
</dbReference>
<dbReference type="SUPFAM" id="SSF50978">
    <property type="entry name" value="WD40 repeat-like"/>
    <property type="match status" value="1"/>
</dbReference>
<dbReference type="PROSITE" id="PS50896">
    <property type="entry name" value="LISH"/>
    <property type="match status" value="1"/>
</dbReference>
<dbReference type="PROSITE" id="PS00678">
    <property type="entry name" value="WD_REPEATS_1"/>
    <property type="match status" value="3"/>
</dbReference>
<dbReference type="PROSITE" id="PS50082">
    <property type="entry name" value="WD_REPEATS_2"/>
    <property type="match status" value="6"/>
</dbReference>
<dbReference type="PROSITE" id="PS50294">
    <property type="entry name" value="WD_REPEATS_REGION"/>
    <property type="match status" value="1"/>
</dbReference>
<name>LIS1_AJECH</name>
<reference key="1">
    <citation type="submission" date="2009-05" db="EMBL/GenBank/DDBJ databases">
        <title>The genome sequence of Ajellomyces capsulatus strain H143.</title>
        <authorList>
            <person name="Champion M."/>
            <person name="Cuomo C.A."/>
            <person name="Ma L.-J."/>
            <person name="Henn M.R."/>
            <person name="Sil A."/>
            <person name="Goldman B."/>
            <person name="Young S.K."/>
            <person name="Kodira C.D."/>
            <person name="Zeng Q."/>
            <person name="Koehrsen M."/>
            <person name="Alvarado L."/>
            <person name="Berlin A.M."/>
            <person name="Borenstein D."/>
            <person name="Chen Z."/>
            <person name="Engels R."/>
            <person name="Freedman E."/>
            <person name="Gellesch M."/>
            <person name="Goldberg J."/>
            <person name="Griggs A."/>
            <person name="Gujja S."/>
            <person name="Heiman D.I."/>
            <person name="Hepburn T.A."/>
            <person name="Howarth C."/>
            <person name="Jen D."/>
            <person name="Larson L."/>
            <person name="Lewis B."/>
            <person name="Mehta T."/>
            <person name="Park D."/>
            <person name="Pearson M."/>
            <person name="Roberts A."/>
            <person name="Saif S."/>
            <person name="Shea T.D."/>
            <person name="Shenoy N."/>
            <person name="Sisk P."/>
            <person name="Stolte C."/>
            <person name="Sykes S."/>
            <person name="Walk T."/>
            <person name="White J."/>
            <person name="Yandava C."/>
            <person name="Klein B."/>
            <person name="McEwen J.G."/>
            <person name="Puccia R."/>
            <person name="Goldman G.H."/>
            <person name="Felipe M.S."/>
            <person name="Nino-Vega G."/>
            <person name="San-Blas G."/>
            <person name="Taylor J.W."/>
            <person name="Mendoza L."/>
            <person name="Galagan J.E."/>
            <person name="Nusbaum C."/>
            <person name="Birren B.W."/>
        </authorList>
    </citation>
    <scope>NUCLEOTIDE SEQUENCE [LARGE SCALE GENOMIC DNA]</scope>
    <source>
        <strain>H143</strain>
    </source>
</reference>
<evidence type="ECO:0000255" key="1">
    <source>
        <dbReference type="HAMAP-Rule" id="MF_03141"/>
    </source>
</evidence>
<organism>
    <name type="scientific">Ajellomyces capsulatus (strain H143)</name>
    <name type="common">Darling's disease fungus</name>
    <name type="synonym">Histoplasma capsulatum</name>
    <dbReference type="NCBI Taxonomy" id="544712"/>
    <lineage>
        <taxon>Eukaryota</taxon>
        <taxon>Fungi</taxon>
        <taxon>Dikarya</taxon>
        <taxon>Ascomycota</taxon>
        <taxon>Pezizomycotina</taxon>
        <taxon>Eurotiomycetes</taxon>
        <taxon>Eurotiomycetidae</taxon>
        <taxon>Onygenales</taxon>
        <taxon>Ajellomycetaceae</taxon>
        <taxon>Histoplasma</taxon>
    </lineage>
</organism>